<keyword id="KW-0436">Ligase</keyword>
<keyword id="KW-0597">Phosphoprotein</keyword>
<keyword id="KW-0662">Pyridine nucleotide biosynthesis</keyword>
<dbReference type="EC" id="6.3.4.21" evidence="1"/>
<dbReference type="EMBL" id="CP001161">
    <property type="protein sequence ID" value="ACL30717.1"/>
    <property type="molecule type" value="Genomic_DNA"/>
</dbReference>
<dbReference type="RefSeq" id="WP_009874317.1">
    <property type="nucleotide sequence ID" value="NC_011833.1"/>
</dbReference>
<dbReference type="SMR" id="B8D9E6"/>
<dbReference type="KEGG" id="bap:BUAP5A_354"/>
<dbReference type="HOGENOM" id="CLU_030991_1_0_6"/>
<dbReference type="OrthoDB" id="9771406at2"/>
<dbReference type="UniPathway" id="UPA00253">
    <property type="reaction ID" value="UER00457"/>
</dbReference>
<dbReference type="Proteomes" id="UP000006904">
    <property type="component" value="Chromosome"/>
</dbReference>
<dbReference type="GO" id="GO:0005829">
    <property type="term" value="C:cytosol"/>
    <property type="evidence" value="ECO:0007669"/>
    <property type="project" value="TreeGrafter"/>
</dbReference>
<dbReference type="GO" id="GO:0004516">
    <property type="term" value="F:nicotinate phosphoribosyltransferase activity"/>
    <property type="evidence" value="ECO:0007669"/>
    <property type="project" value="UniProtKB-UniRule"/>
</dbReference>
<dbReference type="GO" id="GO:0034355">
    <property type="term" value="P:NAD biosynthetic process via the salvage pathway"/>
    <property type="evidence" value="ECO:0007669"/>
    <property type="project" value="TreeGrafter"/>
</dbReference>
<dbReference type="CDD" id="cd01401">
    <property type="entry name" value="PncB_like"/>
    <property type="match status" value="1"/>
</dbReference>
<dbReference type="Gene3D" id="3.20.140.10">
    <property type="entry name" value="nicotinate phosphoribosyltransferase"/>
    <property type="match status" value="1"/>
</dbReference>
<dbReference type="HAMAP" id="MF_00570">
    <property type="entry name" value="NAPRTase"/>
    <property type="match status" value="1"/>
</dbReference>
<dbReference type="InterPro" id="IPR041525">
    <property type="entry name" value="N/Namide_PRibTrfase"/>
</dbReference>
<dbReference type="InterPro" id="IPR040727">
    <property type="entry name" value="NAPRTase_N"/>
</dbReference>
<dbReference type="InterPro" id="IPR006406">
    <property type="entry name" value="Nic_PRibTrfase"/>
</dbReference>
<dbReference type="InterPro" id="IPR007229">
    <property type="entry name" value="Nic_PRibTrfase-Fam"/>
</dbReference>
<dbReference type="InterPro" id="IPR036068">
    <property type="entry name" value="Nicotinate_pribotase-like_C"/>
</dbReference>
<dbReference type="NCBIfam" id="TIGR01514">
    <property type="entry name" value="NAPRTase"/>
    <property type="match status" value="1"/>
</dbReference>
<dbReference type="NCBIfam" id="NF003704">
    <property type="entry name" value="PRK05321.1"/>
    <property type="match status" value="1"/>
</dbReference>
<dbReference type="PANTHER" id="PTHR11098">
    <property type="entry name" value="NICOTINATE PHOSPHORIBOSYLTRANSFERASE"/>
    <property type="match status" value="1"/>
</dbReference>
<dbReference type="PANTHER" id="PTHR11098:SF1">
    <property type="entry name" value="NICOTINATE PHOSPHORIBOSYLTRANSFERASE"/>
    <property type="match status" value="1"/>
</dbReference>
<dbReference type="Pfam" id="PF04095">
    <property type="entry name" value="NAPRTase"/>
    <property type="match status" value="1"/>
</dbReference>
<dbReference type="Pfam" id="PF17767">
    <property type="entry name" value="NAPRTase_N"/>
    <property type="match status" value="1"/>
</dbReference>
<dbReference type="PIRSF" id="PIRSF000484">
    <property type="entry name" value="NAPRT"/>
    <property type="match status" value="1"/>
</dbReference>
<dbReference type="SUPFAM" id="SSF51690">
    <property type="entry name" value="Nicotinate/Quinolinate PRTase C-terminal domain-like"/>
    <property type="match status" value="1"/>
</dbReference>
<dbReference type="SUPFAM" id="SSF54675">
    <property type="entry name" value="Nicotinate/Quinolinate PRTase N-terminal domain-like"/>
    <property type="match status" value="1"/>
</dbReference>
<organism>
    <name type="scientific">Buchnera aphidicola subsp. Acyrthosiphon pisum (strain 5A)</name>
    <dbReference type="NCBI Taxonomy" id="563178"/>
    <lineage>
        <taxon>Bacteria</taxon>
        <taxon>Pseudomonadati</taxon>
        <taxon>Pseudomonadota</taxon>
        <taxon>Gammaproteobacteria</taxon>
        <taxon>Enterobacterales</taxon>
        <taxon>Erwiniaceae</taxon>
        <taxon>Buchnera</taxon>
    </lineage>
</organism>
<gene>
    <name evidence="1" type="primary">pncB</name>
    <name type="ordered locus">BUAP5A_354</name>
</gene>
<proteinExistence type="inferred from homology"/>
<name>PNCB_BUCA5</name>
<feature type="chain" id="PRO_1000146836" description="Nicotinate phosphoribosyltransferase">
    <location>
        <begin position="1"/>
        <end position="399"/>
    </location>
</feature>
<feature type="modified residue" description="Phosphohistidine; by autocatalysis" evidence="1">
    <location>
        <position position="221"/>
    </location>
</feature>
<sequence length="399" mass="46751">MKRYDYPIVKTLLDTDAYKLHMQQAVFYHYKNVNVVAEFLCRGDNFLGCYANILLDQISMMRSLSLSHEEYVYMTSFPFFKKEYLHWLKKFRYNVSQVKINSYQGRLHIRISGLWKEVILWEVPILALISEVFHGNFSPEITSQSALQYLDIKLKKFFNRTKYIDLSHLKIVDFGTRRRFSYDVQYSIVKRLKESFPFLIGSSNYHIARILKIKPVGTQAHEWFQAHQQIGSNLKNSQILALQKWLYQYKNHLGIALTDSITMDAFLDDFNLHFASFYQGIRHDSGDPVKWGEKALKHYEKLGIDPCTKTLLFSDNLDFKKIISLYKKFHKKINVIFGIGTKLTCDIPYVKPLNIVIKLVECNGKPVAKISDSPGKTFCLDRIFLKNLCQVFNVSLKNR</sequence>
<reference key="1">
    <citation type="journal article" date="2009" name="Science">
        <title>The dynamics and time scale of ongoing genomic erosion in symbiotic bacteria.</title>
        <authorList>
            <person name="Moran N.A."/>
            <person name="McLaughlin H.J."/>
            <person name="Sorek R."/>
        </authorList>
    </citation>
    <scope>NUCLEOTIDE SEQUENCE [LARGE SCALE GENOMIC DNA]</scope>
    <source>
        <strain>5A</strain>
    </source>
</reference>
<evidence type="ECO:0000255" key="1">
    <source>
        <dbReference type="HAMAP-Rule" id="MF_00570"/>
    </source>
</evidence>
<comment type="function">
    <text evidence="1">Catalyzes the synthesis of beta-nicotinate D-ribonucleotide from nicotinate and 5-phospho-D-ribose 1-phosphate at the expense of ATP.</text>
</comment>
<comment type="catalytic activity">
    <reaction evidence="1">
        <text>nicotinate + 5-phospho-alpha-D-ribose 1-diphosphate + ATP + H2O = nicotinate beta-D-ribonucleotide + ADP + phosphate + diphosphate</text>
        <dbReference type="Rhea" id="RHEA:36163"/>
        <dbReference type="ChEBI" id="CHEBI:15377"/>
        <dbReference type="ChEBI" id="CHEBI:30616"/>
        <dbReference type="ChEBI" id="CHEBI:32544"/>
        <dbReference type="ChEBI" id="CHEBI:33019"/>
        <dbReference type="ChEBI" id="CHEBI:43474"/>
        <dbReference type="ChEBI" id="CHEBI:57502"/>
        <dbReference type="ChEBI" id="CHEBI:58017"/>
        <dbReference type="ChEBI" id="CHEBI:456216"/>
        <dbReference type="EC" id="6.3.4.21"/>
    </reaction>
</comment>
<comment type="pathway">
    <text evidence="1">Cofactor biosynthesis; NAD(+) biosynthesis; nicotinate D-ribonucleotide from nicotinate: step 1/1.</text>
</comment>
<comment type="PTM">
    <text evidence="1">Transiently phosphorylated on a His residue during the reaction cycle. Phosphorylation strongly increases the affinity for substrates and increases the rate of nicotinate D-ribonucleotide production. Dephosphorylation regenerates the low-affinity form of the enzyme, leading to product release.</text>
</comment>
<comment type="similarity">
    <text evidence="1">Belongs to the NAPRTase family.</text>
</comment>
<protein>
    <recommendedName>
        <fullName evidence="1">Nicotinate phosphoribosyltransferase</fullName>
        <shortName evidence="1">NAPRTase</shortName>
        <ecNumber evidence="1">6.3.4.21</ecNumber>
    </recommendedName>
</protein>
<accession>B8D9E6</accession>